<proteinExistence type="inferred from homology"/>
<organism>
    <name type="scientific">Macaca mulatta</name>
    <name type="common">Rhesus macaque</name>
    <dbReference type="NCBI Taxonomy" id="9544"/>
    <lineage>
        <taxon>Eukaryota</taxon>
        <taxon>Metazoa</taxon>
        <taxon>Chordata</taxon>
        <taxon>Craniata</taxon>
        <taxon>Vertebrata</taxon>
        <taxon>Euteleostomi</taxon>
        <taxon>Mammalia</taxon>
        <taxon>Eutheria</taxon>
        <taxon>Euarchontoglires</taxon>
        <taxon>Primates</taxon>
        <taxon>Haplorrhini</taxon>
        <taxon>Catarrhini</taxon>
        <taxon>Cercopithecidae</taxon>
        <taxon>Cercopithecinae</taxon>
        <taxon>Macaca</taxon>
    </lineage>
</organism>
<comment type="function">
    <text evidence="2">Shared alpha chain of the active heterodimeric glycoprotein hormones thyrotropin/thyroid stimulating hormone/TSH, lutropin/luteinizing hormone/LH, follitropin/follicle stimulating hormone/FSH and choriogonadotropin/CG. These hormones bind specific receptors on target cells that in turn activate downstream signaling pathways.</text>
</comment>
<comment type="subunit">
    <text evidence="2">Heterodimer. The active hormones thyrotropin, lutropin, follitropin and choriogonadotropin are heterodimers composed of CGA, a common alpha chain described here and a unique beta chain which confers their biological specificity to the hormones: TSHB for thyrotropin, LHB for lutropin, FSHB for follitropin and choriogonadotropin subunit beta/CGB for choriogonadotropin.</text>
</comment>
<comment type="subcellular location">
    <subcellularLocation>
        <location evidence="2">Secreted</location>
    </subcellularLocation>
</comment>
<comment type="similarity">
    <text evidence="3">Belongs to the glycoprotein hormones subunit alpha family.</text>
</comment>
<protein>
    <recommendedName>
        <fullName>Glycoprotein hormones alpha chain</fullName>
    </recommendedName>
    <alternativeName>
        <fullName>Anterior pituitary glycoprotein hormones common subunit alpha</fullName>
    </alternativeName>
    <alternativeName>
        <fullName>Choriogonadotropin alpha chain</fullName>
    </alternativeName>
    <alternativeName>
        <fullName>Chorionic gonadotrophin subunit alpha</fullName>
        <shortName>CG-alpha</shortName>
    </alternativeName>
    <alternativeName>
        <fullName>Follicle-stimulating hormone alpha chain</fullName>
        <shortName>FSH-alpha</shortName>
    </alternativeName>
    <alternativeName>
        <fullName>Follitropin alpha chain</fullName>
    </alternativeName>
    <alternativeName>
        <fullName>Luteinizing hormone alpha chain</fullName>
        <shortName>LSH-alpha</shortName>
    </alternativeName>
    <alternativeName>
        <fullName>Lutropin alpha chain</fullName>
    </alternativeName>
    <alternativeName>
        <fullName>Thyroid-stimulating hormone alpha chain</fullName>
        <shortName>TSH-alpha</shortName>
    </alternativeName>
    <alternativeName>
        <fullName>Thyrotropin alpha chain</fullName>
    </alternativeName>
</protein>
<dbReference type="PIR" id="A39555">
    <property type="entry name" value="A39555"/>
</dbReference>
<dbReference type="SMR" id="P22762"/>
<dbReference type="FunCoup" id="P22762">
    <property type="interactions" value="634"/>
</dbReference>
<dbReference type="STRING" id="9544.ENSMMUP00000072499"/>
<dbReference type="GlyCosmos" id="P22762">
    <property type="glycosylation" value="2 sites, No reported glycans"/>
</dbReference>
<dbReference type="PaxDb" id="9544-ENSMMUP00000000313"/>
<dbReference type="eggNOG" id="ENOG502S1PK">
    <property type="taxonomic scope" value="Eukaryota"/>
</dbReference>
<dbReference type="InParanoid" id="P22762"/>
<dbReference type="Proteomes" id="UP000006718">
    <property type="component" value="Unassembled WGS sequence"/>
</dbReference>
<dbReference type="GO" id="GO:0005615">
    <property type="term" value="C:extracellular space"/>
    <property type="evidence" value="ECO:0000250"/>
    <property type="project" value="UniProtKB"/>
</dbReference>
<dbReference type="GO" id="GO:0016914">
    <property type="term" value="C:follicle-stimulating hormone complex"/>
    <property type="evidence" value="ECO:0000250"/>
    <property type="project" value="UniProtKB"/>
</dbReference>
<dbReference type="GO" id="GO:0016913">
    <property type="term" value="F:follicle-stimulating hormone activity"/>
    <property type="evidence" value="ECO:0000250"/>
    <property type="project" value="UniProtKB"/>
</dbReference>
<dbReference type="GO" id="GO:0007186">
    <property type="term" value="P:G protein-coupled receptor signaling pathway"/>
    <property type="evidence" value="ECO:0000250"/>
    <property type="project" value="UniProtKB"/>
</dbReference>
<dbReference type="GO" id="GO:0010893">
    <property type="term" value="P:positive regulation of steroid biosynthetic process"/>
    <property type="evidence" value="ECO:0000250"/>
    <property type="project" value="UniProtKB"/>
</dbReference>
<dbReference type="GO" id="GO:0010469">
    <property type="term" value="P:regulation of signaling receptor activity"/>
    <property type="evidence" value="ECO:0000250"/>
    <property type="project" value="UniProtKB"/>
</dbReference>
<dbReference type="GO" id="GO:0006590">
    <property type="term" value="P:thyroid hormone generation"/>
    <property type="evidence" value="ECO:0000318"/>
    <property type="project" value="GO_Central"/>
</dbReference>
<dbReference type="FunFam" id="2.10.90.10:FF:000011">
    <property type="entry name" value="Glycoprotein hormones alpha chain"/>
    <property type="match status" value="1"/>
</dbReference>
<dbReference type="Gene3D" id="2.10.90.10">
    <property type="entry name" value="Cystine-knot cytokines"/>
    <property type="match status" value="1"/>
</dbReference>
<dbReference type="InterPro" id="IPR029034">
    <property type="entry name" value="Cystine-knot_cytokine"/>
</dbReference>
<dbReference type="InterPro" id="IPR000476">
    <property type="entry name" value="Glyco_hormone"/>
</dbReference>
<dbReference type="PANTHER" id="PTHR11509">
    <property type="entry name" value="GLYCOPROTEIN HORMONE ALPHA CHAIN"/>
    <property type="match status" value="1"/>
</dbReference>
<dbReference type="PANTHER" id="PTHR11509:SF0">
    <property type="entry name" value="GLYCOPROTEIN HORMONES ALPHA CHAIN"/>
    <property type="match status" value="1"/>
</dbReference>
<dbReference type="Pfam" id="PF00236">
    <property type="entry name" value="Hormone_6"/>
    <property type="match status" value="1"/>
</dbReference>
<dbReference type="PRINTS" id="PR00274">
    <property type="entry name" value="GLYCOHORMONE"/>
</dbReference>
<dbReference type="SMART" id="SM00067">
    <property type="entry name" value="GHA"/>
    <property type="match status" value="1"/>
</dbReference>
<dbReference type="SUPFAM" id="SSF57501">
    <property type="entry name" value="Cystine-knot cytokines"/>
    <property type="match status" value="1"/>
</dbReference>
<dbReference type="PROSITE" id="PS00779">
    <property type="entry name" value="GLYCO_HORMONE_ALPHA_1"/>
    <property type="match status" value="1"/>
</dbReference>
<dbReference type="PROSITE" id="PS00780">
    <property type="entry name" value="GLYCO_HORMONE_ALPHA_2"/>
    <property type="match status" value="1"/>
</dbReference>
<dbReference type="PROSITE" id="PS50277">
    <property type="entry name" value="GLYCO_HORMONE_ALPHA_3"/>
    <property type="match status" value="1"/>
</dbReference>
<accession>P22762</accession>
<reference key="1">
    <citation type="journal article" date="1991" name="DNA Cell Biol.">
        <title>Molecular cloning of the rhesus glycoprotein hormone alpha-subunit gene.</title>
        <authorList>
            <person name="Golos T.G."/>
            <person name="Durning M."/>
            <person name="Fisher J.M."/>
        </authorList>
    </citation>
    <scope>NUCLEOTIDE SEQUENCE [GENOMIC DNA]</scope>
</reference>
<gene>
    <name type="primary">CGA</name>
</gene>
<feature type="signal peptide" evidence="1">
    <location>
        <begin position="1"/>
        <end position="24"/>
    </location>
</feature>
<feature type="chain" id="PRO_0000011642" description="Glycoprotein hormones alpha chain">
    <location>
        <begin position="25"/>
        <end position="120"/>
    </location>
</feature>
<feature type="glycosylation site" description="N-linked (GlcNAc...) asparagine" evidence="2">
    <location>
        <position position="80"/>
    </location>
</feature>
<feature type="glycosylation site" description="N-linked (GlcNAc...) asparagine" evidence="2">
    <location>
        <position position="106"/>
    </location>
</feature>
<feature type="disulfide bond" evidence="2">
    <location>
        <begin position="35"/>
        <end position="59"/>
    </location>
</feature>
<feature type="disulfide bond" evidence="2">
    <location>
        <begin position="38"/>
        <end position="88"/>
    </location>
</feature>
<feature type="disulfide bond" evidence="2">
    <location>
        <begin position="56"/>
        <end position="110"/>
    </location>
</feature>
<feature type="disulfide bond" evidence="2">
    <location>
        <begin position="60"/>
        <end position="112"/>
    </location>
</feature>
<feature type="disulfide bond" evidence="2">
    <location>
        <begin position="87"/>
        <end position="115"/>
    </location>
</feature>
<keyword id="KW-1015">Disulfide bond</keyword>
<keyword id="KW-0325">Glycoprotein</keyword>
<keyword id="KW-0372">Hormone</keyword>
<keyword id="KW-1185">Reference proteome</keyword>
<keyword id="KW-0964">Secreted</keyword>
<keyword id="KW-0732">Signal</keyword>
<name>GLHA_MACMU</name>
<evidence type="ECO:0000250" key="1"/>
<evidence type="ECO:0000250" key="2">
    <source>
        <dbReference type="UniProtKB" id="P01215"/>
    </source>
</evidence>
<evidence type="ECO:0000305" key="3"/>
<sequence length="120" mass="13785">MDYYRKYAAVILVTLSVFLHILHSFPDGEFTMQDCPECKPRENKFFSKPGAPIYQCMGCCFSRAYPTPVRSKKTMLVQKNVTSESTCCVAKSLTRVMVMGSVRVENHTECHCSTCYYHKF</sequence>